<evidence type="ECO:0000250" key="1"/>
<evidence type="ECO:0000250" key="2">
    <source>
        <dbReference type="UniProtKB" id="P49591"/>
    </source>
</evidence>
<evidence type="ECO:0000269" key="3">
    <source>
    </source>
</evidence>
<evidence type="ECO:0000269" key="4">
    <source>
    </source>
</evidence>
<evidence type="ECO:0000269" key="5">
    <source>
    </source>
</evidence>
<evidence type="ECO:0000303" key="6">
    <source>
    </source>
</evidence>
<evidence type="ECO:0000305" key="7"/>
<evidence type="ECO:0000305" key="8">
    <source>
    </source>
</evidence>
<comment type="function">
    <text evidence="4">Catalyzes the attachment of serine to tRNA(Ser) in a two-step reaction: serine is first activated by ATP to form Ser-AMP and then transferred to the acceptor end of tRNA(Ser).</text>
</comment>
<comment type="catalytic activity">
    <reaction evidence="4">
        <text>tRNA(Ser) + L-serine + ATP = L-seryl-tRNA(Ser) + AMP + diphosphate + H(+)</text>
        <dbReference type="Rhea" id="RHEA:12292"/>
        <dbReference type="Rhea" id="RHEA-COMP:9669"/>
        <dbReference type="Rhea" id="RHEA-COMP:9703"/>
        <dbReference type="ChEBI" id="CHEBI:15378"/>
        <dbReference type="ChEBI" id="CHEBI:30616"/>
        <dbReference type="ChEBI" id="CHEBI:33019"/>
        <dbReference type="ChEBI" id="CHEBI:33384"/>
        <dbReference type="ChEBI" id="CHEBI:78442"/>
        <dbReference type="ChEBI" id="CHEBI:78533"/>
        <dbReference type="ChEBI" id="CHEBI:456215"/>
        <dbReference type="EC" id="6.1.1.11"/>
    </reaction>
    <physiologicalReaction direction="left-to-right" evidence="4">
        <dbReference type="Rhea" id="RHEA:12293"/>
    </physiologicalReaction>
</comment>
<comment type="subunit">
    <text evidence="3 4">Homodimer; the tRNA molecule probably binds across the dimer (PubMed:3031581). Interacts with ABP140; interaction is required for the tRNA N(3)-methylcytidine methyltransferase activity of ABP140 (PubMed:28003514).</text>
</comment>
<comment type="subcellular location">
    <subcellularLocation>
        <location evidence="2">Cytoplasm</location>
        <location evidence="2">Cytosol</location>
    </subcellularLocation>
</comment>
<comment type="domain">
    <text evidence="2">Consists of two distinct domains, a catalytic core and a N-terminal extension that is involved in tRNA binding.</text>
</comment>
<comment type="PTM">
    <text evidence="5">Conjugated to URM1, a ubiquitin-like protein, in response to oxidative stresses. The attachment of URM1 to lysine residues exclusively depends on the presence of a peroxidatic cysteine in the target protein, with low specificity for the particular residue, motif, or structural context at which urmylation can occur. The URM1-conjugation reaction is mechanistically and directly coupled to the process of cysteine persulfidation, transfering the sulfur atom of the URM1 thiocarboxyl group to redox-active cysteine residues in the target protein if it is exposed to oxidative conditions.</text>
</comment>
<comment type="PTM">
    <text evidence="8">Persulfidated on specific redox-active cysteine residues. Persulfidation (also called protein S-sulfhydration) may provide a molecular mechanism that enables cells to protect vulnerable cysteine residues from reactive oxygen species (ROS) under stress conditions.</text>
</comment>
<comment type="similarity">
    <text evidence="7">Belongs to the class-II aminoacyl-tRNA synthetase family. Type-1 seryl-tRNA synthetase subfamily.</text>
</comment>
<comment type="caution">
    <text evidence="7">Although this enzyme participates in the selenocysteinyl-tRNA(Sec) biosynthesis pathway in many taxa, this pathway has been shown in PubMed:30742068 to be lost in dikarya.</text>
</comment>
<protein>
    <recommendedName>
        <fullName evidence="7">Serine--tRNA ligase, cytoplasmic</fullName>
        <ecNumber evidence="4">6.1.1.11</ecNumber>
    </recommendedName>
    <alternativeName>
        <fullName evidence="6">Seryl-tRNA synthetase</fullName>
        <shortName>SerRS</shortName>
    </alternativeName>
    <alternativeName>
        <fullName evidence="7">Seryl-tRNA(Ser) synthetase</fullName>
    </alternativeName>
</protein>
<accession>P07284</accession>
<accession>D6VS09</accession>
<organism>
    <name type="scientific">Saccharomyces cerevisiae (strain ATCC 204508 / S288c)</name>
    <name type="common">Baker's yeast</name>
    <dbReference type="NCBI Taxonomy" id="559292"/>
    <lineage>
        <taxon>Eukaryota</taxon>
        <taxon>Fungi</taxon>
        <taxon>Dikarya</taxon>
        <taxon>Ascomycota</taxon>
        <taxon>Saccharomycotina</taxon>
        <taxon>Saccharomycetes</taxon>
        <taxon>Saccharomycetales</taxon>
        <taxon>Saccharomycetaceae</taxon>
        <taxon>Saccharomyces</taxon>
    </lineage>
</organism>
<feature type="chain" id="PRO_0000122199" description="Serine--tRNA ligase, cytoplasmic">
    <location>
        <begin position="1"/>
        <end position="462"/>
    </location>
</feature>
<feature type="binding site" evidence="1">
    <location>
        <begin position="246"/>
        <end position="248"/>
    </location>
    <ligand>
        <name>L-serine</name>
        <dbReference type="ChEBI" id="CHEBI:33384"/>
    </ligand>
</feature>
<feature type="binding site" evidence="1">
    <location>
        <begin position="279"/>
        <end position="281"/>
    </location>
    <ligand>
        <name>ATP</name>
        <dbReference type="ChEBI" id="CHEBI:30616"/>
    </ligand>
</feature>
<feature type="binding site" evidence="1">
    <location>
        <position position="295"/>
    </location>
    <ligand>
        <name>ATP</name>
        <dbReference type="ChEBI" id="CHEBI:30616"/>
    </ligand>
</feature>
<feature type="binding site" evidence="1">
    <location>
        <position position="302"/>
    </location>
    <ligand>
        <name>L-serine</name>
        <dbReference type="ChEBI" id="CHEBI:33384"/>
    </ligand>
</feature>
<feature type="binding site" evidence="1">
    <location>
        <begin position="366"/>
        <end position="369"/>
    </location>
    <ligand>
        <name>ATP</name>
        <dbReference type="ChEBI" id="CHEBI:30616"/>
    </ligand>
</feature>
<feature type="binding site" evidence="1">
    <location>
        <position position="404"/>
    </location>
    <ligand>
        <name>L-serine</name>
        <dbReference type="ChEBI" id="CHEBI:33384"/>
    </ligand>
</feature>
<feature type="modified residue" description="Cysteine persulfide" evidence="5">
    <location>
        <position position="373"/>
    </location>
</feature>
<feature type="modified residue" description="Cysteine persulfide" evidence="5">
    <location>
        <position position="400"/>
    </location>
</feature>
<feature type="cross-link" description="Glycyl lysine isopeptide (Lys-Gly) (interchain with G-Cter in URM1)" evidence="5">
    <location>
        <position position="241"/>
    </location>
</feature>
<feature type="cross-link" description="Glycyl lysine isopeptide (Lys-Gly) (interchain with G-Cter in URM1)" evidence="5">
    <location>
        <position position="350"/>
    </location>
</feature>
<feature type="cross-link" description="Glycyl lysine isopeptide (Lys-Gly) (interchain with G-Cter in URM1)" evidence="5">
    <location>
        <position position="351"/>
    </location>
</feature>
<feature type="sequence conflict" description="In Ref. 1; CAA28572." evidence="7" ref="1">
    <original>L</original>
    <variation>P</variation>
    <location>
        <position position="224"/>
    </location>
</feature>
<proteinExistence type="evidence at protein level"/>
<gene>
    <name type="primary">SES1</name>
    <name evidence="6" type="synonym">SERS</name>
    <name type="ordered locus">YDR023W</name>
    <name type="ORF">YD9813.01</name>
</gene>
<sequence>MLDINQFIEDKGGNPELIRQSQKARNASVEIVDEIISDYKDWVKTRFELDELNKKFNKLQKDIGLKFKNKEDASGLLAEKEKLTQQKKELTEKEQQEDKDLKKKVFQVGNIVHPSVVVSNDEENNELVRTWKPEDLEAVGPIASVTGKPASLSHHEILLRLDGYDPDRGVKICGHRGYFFRNYGVFLNQALINYGLQFLAAKGYIPLQAPVMMNKELMSKTAQLSEFDEELYKVIDGEDEKYLIATSEQPISAYHSGEWFEKPQEQLPIHYVGYSSCFRREAGSHGKDAWGVFRVHAFEKIEQFVITEPEKSWEEFEKMISYSEEFYKSLKLPYRIVGIVSGELNNAAAKKYDLEAWFPYQKEYKELVSCSNCTDYQSRNLEIRCGIKKMGDREKKYVHCLNSTLAATQRALCCILENYQTEDGLVVPEVLRKYIPGEPEFLPFVNELPKNSTSSKDKKKKN</sequence>
<reference key="1">
    <citation type="journal article" date="1987" name="Nucleic Acids Res.">
        <title>Cloning and characterization of the gene coding for cytoplasmic seryl-tRNA synthetase from Saccharomyces cerevisiae.</title>
        <authorList>
            <person name="Weygand-Durasevic I."/>
            <person name="Johnson-Burke D."/>
            <person name="Soell D."/>
        </authorList>
    </citation>
    <scope>NUCLEOTIDE SEQUENCE [GENOMIC DNA]</scope>
    <scope>PROTEIN SEQUENCE OF 5-9 AND 182-190</scope>
    <scope>FUNCTION</scope>
    <scope>CATALYTIC ACTIVITY</scope>
    <scope>SUBUNIT</scope>
</reference>
<reference key="2">
    <citation type="journal article" date="1996" name="Yeast">
        <title>Sequencing and analysis of a 35.4 kb region on the right arm of chromosome IV from Saccharomyces cerevisiae reveal 23 open reading frames.</title>
        <authorList>
            <person name="Eide L.G."/>
            <person name="Sander C."/>
            <person name="Prydz H."/>
        </authorList>
    </citation>
    <scope>NUCLEOTIDE SEQUENCE [GENOMIC DNA]</scope>
</reference>
<reference key="3">
    <citation type="journal article" date="1997" name="Nature">
        <title>The nucleotide sequence of Saccharomyces cerevisiae chromosome IV.</title>
        <authorList>
            <person name="Jacq C."/>
            <person name="Alt-Moerbe J."/>
            <person name="Andre B."/>
            <person name="Arnold W."/>
            <person name="Bahr A."/>
            <person name="Ballesta J.P.G."/>
            <person name="Bargues M."/>
            <person name="Baron L."/>
            <person name="Becker A."/>
            <person name="Biteau N."/>
            <person name="Bloecker H."/>
            <person name="Blugeon C."/>
            <person name="Boskovic J."/>
            <person name="Brandt P."/>
            <person name="Brueckner M."/>
            <person name="Buitrago M.J."/>
            <person name="Coster F."/>
            <person name="Delaveau T."/>
            <person name="del Rey F."/>
            <person name="Dujon B."/>
            <person name="Eide L.G."/>
            <person name="Garcia-Cantalejo J.M."/>
            <person name="Goffeau A."/>
            <person name="Gomez-Peris A."/>
            <person name="Granotier C."/>
            <person name="Hanemann V."/>
            <person name="Hankeln T."/>
            <person name="Hoheisel J.D."/>
            <person name="Jaeger W."/>
            <person name="Jimenez A."/>
            <person name="Jonniaux J.-L."/>
            <person name="Kraemer C."/>
            <person name="Kuester H."/>
            <person name="Laamanen P."/>
            <person name="Legros Y."/>
            <person name="Louis E.J."/>
            <person name="Moeller-Rieker S."/>
            <person name="Monnet A."/>
            <person name="Moro M."/>
            <person name="Mueller-Auer S."/>
            <person name="Nussbaumer B."/>
            <person name="Paricio N."/>
            <person name="Paulin L."/>
            <person name="Perea J."/>
            <person name="Perez-Alonso M."/>
            <person name="Perez-Ortin J.E."/>
            <person name="Pohl T.M."/>
            <person name="Prydz H."/>
            <person name="Purnelle B."/>
            <person name="Rasmussen S.W."/>
            <person name="Remacha M.A."/>
            <person name="Revuelta J.L."/>
            <person name="Rieger M."/>
            <person name="Salom D."/>
            <person name="Saluz H.P."/>
            <person name="Saiz J.E."/>
            <person name="Saren A.-M."/>
            <person name="Schaefer M."/>
            <person name="Scharfe M."/>
            <person name="Schmidt E.R."/>
            <person name="Schneider C."/>
            <person name="Scholler P."/>
            <person name="Schwarz S."/>
            <person name="Soler-Mira A."/>
            <person name="Urrestarazu L.A."/>
            <person name="Verhasselt P."/>
            <person name="Vissers S."/>
            <person name="Voet M."/>
            <person name="Volckaert G."/>
            <person name="Wagner G."/>
            <person name="Wambutt R."/>
            <person name="Wedler E."/>
            <person name="Wedler H."/>
            <person name="Woelfl S."/>
            <person name="Harris D.E."/>
            <person name="Bowman S."/>
            <person name="Brown D."/>
            <person name="Churcher C.M."/>
            <person name="Connor R."/>
            <person name="Dedman K."/>
            <person name="Gentles S."/>
            <person name="Hamlin N."/>
            <person name="Hunt S."/>
            <person name="Jones L."/>
            <person name="McDonald S."/>
            <person name="Murphy L.D."/>
            <person name="Niblett D."/>
            <person name="Odell C."/>
            <person name="Oliver K."/>
            <person name="Rajandream M.A."/>
            <person name="Richards C."/>
            <person name="Shore L."/>
            <person name="Walsh S.V."/>
            <person name="Barrell B.G."/>
            <person name="Dietrich F.S."/>
            <person name="Mulligan J.T."/>
            <person name="Allen E."/>
            <person name="Araujo R."/>
            <person name="Aviles E."/>
            <person name="Berno A."/>
            <person name="Carpenter J."/>
            <person name="Chen E."/>
            <person name="Cherry J.M."/>
            <person name="Chung E."/>
            <person name="Duncan M."/>
            <person name="Hunicke-Smith S."/>
            <person name="Hyman R.W."/>
            <person name="Komp C."/>
            <person name="Lashkari D."/>
            <person name="Lew H."/>
            <person name="Lin D."/>
            <person name="Mosedale D."/>
            <person name="Nakahara K."/>
            <person name="Namath A."/>
            <person name="Oefner P."/>
            <person name="Oh C."/>
            <person name="Petel F.X."/>
            <person name="Roberts D."/>
            <person name="Schramm S."/>
            <person name="Schroeder M."/>
            <person name="Shogren T."/>
            <person name="Shroff N."/>
            <person name="Winant A."/>
            <person name="Yelton M.A."/>
            <person name="Botstein D."/>
            <person name="Davis R.W."/>
            <person name="Johnston M."/>
            <person name="Andrews S."/>
            <person name="Brinkman R."/>
            <person name="Cooper J."/>
            <person name="Ding H."/>
            <person name="Du Z."/>
            <person name="Favello A."/>
            <person name="Fulton L."/>
            <person name="Gattung S."/>
            <person name="Greco T."/>
            <person name="Hallsworth K."/>
            <person name="Hawkins J."/>
            <person name="Hillier L.W."/>
            <person name="Jier M."/>
            <person name="Johnson D."/>
            <person name="Johnston L."/>
            <person name="Kirsten J."/>
            <person name="Kucaba T."/>
            <person name="Langston Y."/>
            <person name="Latreille P."/>
            <person name="Le T."/>
            <person name="Mardis E."/>
            <person name="Menezes S."/>
            <person name="Miller N."/>
            <person name="Nhan M."/>
            <person name="Pauley A."/>
            <person name="Peluso D."/>
            <person name="Rifkin L."/>
            <person name="Riles L."/>
            <person name="Taich A."/>
            <person name="Trevaskis E."/>
            <person name="Vignati D."/>
            <person name="Wilcox L."/>
            <person name="Wohldman P."/>
            <person name="Vaudin M."/>
            <person name="Wilson R."/>
            <person name="Waterston R."/>
            <person name="Albermann K."/>
            <person name="Hani J."/>
            <person name="Heumann K."/>
            <person name="Kleine K."/>
            <person name="Mewes H.-W."/>
            <person name="Zollner A."/>
            <person name="Zaccaria P."/>
        </authorList>
    </citation>
    <scope>NUCLEOTIDE SEQUENCE [LARGE SCALE GENOMIC DNA]</scope>
    <source>
        <strain>ATCC 204508 / S288c</strain>
    </source>
</reference>
<reference key="4">
    <citation type="journal article" date="2014" name="G3 (Bethesda)">
        <title>The reference genome sequence of Saccharomyces cerevisiae: Then and now.</title>
        <authorList>
            <person name="Engel S.R."/>
            <person name="Dietrich F.S."/>
            <person name="Fisk D.G."/>
            <person name="Binkley G."/>
            <person name="Balakrishnan R."/>
            <person name="Costanzo M.C."/>
            <person name="Dwight S.S."/>
            <person name="Hitz B.C."/>
            <person name="Karra K."/>
            <person name="Nash R.S."/>
            <person name="Weng S."/>
            <person name="Wong E.D."/>
            <person name="Lloyd P."/>
            <person name="Skrzypek M.S."/>
            <person name="Miyasato S.R."/>
            <person name="Simison M."/>
            <person name="Cherry J.M."/>
        </authorList>
    </citation>
    <scope>GENOME REANNOTATION</scope>
    <source>
        <strain>ATCC 204508 / S288c</strain>
    </source>
</reference>
<reference key="5">
    <citation type="journal article" date="1994" name="Genetics">
        <title>Reduced dosage of genes encoding ribosomal protein S18 suppresses a mitochondrial initiation codon mutation in Saccharomyces cerevisiae.</title>
        <authorList>
            <person name="Folley L.S."/>
            <person name="Fox T.D."/>
        </authorList>
    </citation>
    <scope>NUCLEOTIDE SEQUENCE [GENOMIC DNA] OF 451-462</scope>
    <source>
        <strain>ATCC 204508 / S288c</strain>
    </source>
</reference>
<reference key="6">
    <citation type="journal article" date="2008" name="Mol. Cell. Proteomics">
        <title>A multidimensional chromatography technology for in-depth phosphoproteome analysis.</title>
        <authorList>
            <person name="Albuquerque C.P."/>
            <person name="Smolka M.B."/>
            <person name="Payne S.H."/>
            <person name="Bafna V."/>
            <person name="Eng J."/>
            <person name="Zhou H."/>
        </authorList>
    </citation>
    <scope>IDENTIFICATION BY MASS SPECTROMETRY [LARGE SCALE ANALYSIS]</scope>
</reference>
<reference key="7">
    <citation type="journal article" date="2012" name="Proc. Natl. Acad. Sci. U.S.A.">
        <title>N-terminal acetylome analyses and functional insights of the N-terminal acetyltransferase NatB.</title>
        <authorList>
            <person name="Van Damme P."/>
            <person name="Lasa M."/>
            <person name="Polevoda B."/>
            <person name="Gazquez C."/>
            <person name="Elosegui-Artola A."/>
            <person name="Kim D.S."/>
            <person name="De Juan-Pardo E."/>
            <person name="Demeyer K."/>
            <person name="Hole K."/>
            <person name="Larrea E."/>
            <person name="Timmerman E."/>
            <person name="Prieto J."/>
            <person name="Arnesen T."/>
            <person name="Sherman F."/>
            <person name="Gevaert K."/>
            <person name="Aldabe R."/>
        </authorList>
    </citation>
    <scope>IDENTIFICATION BY MASS SPECTROMETRY [LARGE SCALE ANALYSIS]</scope>
</reference>
<reference key="8">
    <citation type="journal article" date="2017" name="RNA">
        <title>S. cerevisiae Trm140 has two recognition modes for 3-methylcytidine modification of the anticodon loop of tRNA substrates.</title>
        <authorList>
            <person name="Han L."/>
            <person name="Marcus E."/>
            <person name="D'Silva S."/>
            <person name="Phizicky E.M."/>
        </authorList>
    </citation>
    <scope>INTERACTION WITH ABP140</scope>
</reference>
<reference key="9">
    <citation type="journal article" date="2019" name="Nat. Microbiol.">
        <title>Utilization of selenocysteine in early-branching fungal phyla.</title>
        <authorList>
            <person name="Mariotti M."/>
            <person name="Salinas G."/>
            <person name="Gabaldon T."/>
            <person name="Gladyshev V.N."/>
        </authorList>
    </citation>
    <scope>PATHWAY</scope>
</reference>
<reference key="10">
    <citation type="journal article" date="2022" name="EMBO J.">
        <title>E2/E3-independent ubiquitin-like protein conjugation by Urm1 is directly coupled to cysteine persulfidation.</title>
        <authorList>
            <person name="Ravichandran K.E."/>
            <person name="Kaduhr L."/>
            <person name="Skupien-Rabian B."/>
            <person name="Shvetsova E."/>
            <person name="Sokolowski M."/>
            <person name="Krutyholowa R."/>
            <person name="Kwasna D."/>
            <person name="Brachmann C."/>
            <person name="Lin S."/>
            <person name="Guzman Perez S."/>
            <person name="Wilk P."/>
            <person name="Koesters M."/>
            <person name="Grudnik P."/>
            <person name="Jankowska U."/>
            <person name="Leidel S.A."/>
            <person name="Schaffrath R."/>
            <person name="Glatt S."/>
        </authorList>
    </citation>
    <scope>SULFHYDRATION AT CYS-373 AND CYS-400</scope>
    <scope>URMYLATION AT LYS-241; LYS-350 AND LYS-351</scope>
</reference>
<dbReference type="EC" id="6.1.1.11" evidence="4"/>
<dbReference type="EMBL" id="X04884">
    <property type="protein sequence ID" value="CAA28572.1"/>
    <property type="molecule type" value="Genomic_DNA"/>
</dbReference>
<dbReference type="EMBL" id="Z47814">
    <property type="protein sequence ID" value="CAA87802.1"/>
    <property type="molecule type" value="Genomic_DNA"/>
</dbReference>
<dbReference type="EMBL" id="X95966">
    <property type="protein sequence ID" value="CAA65216.1"/>
    <property type="molecule type" value="Genomic_DNA"/>
</dbReference>
<dbReference type="EMBL" id="Z74319">
    <property type="protein sequence ID" value="CAA98844.1"/>
    <property type="molecule type" value="Genomic_DNA"/>
</dbReference>
<dbReference type="EMBL" id="L15408">
    <property type="protein sequence ID" value="AAC37412.1"/>
    <property type="molecule type" value="Genomic_DNA"/>
</dbReference>
<dbReference type="EMBL" id="BK006938">
    <property type="protein sequence ID" value="DAA11869.1"/>
    <property type="molecule type" value="Genomic_DNA"/>
</dbReference>
<dbReference type="PIR" id="S50930">
    <property type="entry name" value="YSBYC"/>
</dbReference>
<dbReference type="RefSeq" id="NP_010306.1">
    <property type="nucleotide sequence ID" value="NM_001180331.1"/>
</dbReference>
<dbReference type="SMR" id="P07284"/>
<dbReference type="BioGRID" id="32074">
    <property type="interactions" value="82"/>
</dbReference>
<dbReference type="DIP" id="DIP-5181N"/>
<dbReference type="FunCoup" id="P07284">
    <property type="interactions" value="1017"/>
</dbReference>
<dbReference type="IntAct" id="P07284">
    <property type="interactions" value="19"/>
</dbReference>
<dbReference type="MINT" id="P07284"/>
<dbReference type="STRING" id="4932.YDR023W"/>
<dbReference type="CarbonylDB" id="P07284"/>
<dbReference type="iPTMnet" id="P07284"/>
<dbReference type="PaxDb" id="4932-YDR023W"/>
<dbReference type="PeptideAtlas" id="P07284"/>
<dbReference type="EnsemblFungi" id="YDR023W_mRNA">
    <property type="protein sequence ID" value="YDR023W"/>
    <property type="gene ID" value="YDR023W"/>
</dbReference>
<dbReference type="GeneID" id="851587"/>
<dbReference type="KEGG" id="sce:YDR023W"/>
<dbReference type="AGR" id="SGD:S000002430"/>
<dbReference type="SGD" id="S000002430">
    <property type="gene designation" value="SES1"/>
</dbReference>
<dbReference type="VEuPathDB" id="FungiDB:YDR023W"/>
<dbReference type="eggNOG" id="KOG2509">
    <property type="taxonomic scope" value="Eukaryota"/>
</dbReference>
<dbReference type="GeneTree" id="ENSGT00940000153792"/>
<dbReference type="HOGENOM" id="CLU_023797_0_2_1"/>
<dbReference type="InParanoid" id="P07284"/>
<dbReference type="OMA" id="GYTPCFR"/>
<dbReference type="OrthoDB" id="10264585at2759"/>
<dbReference type="BioCyc" id="YEAST:G3O-29640-MONOMER"/>
<dbReference type="BioGRID-ORCS" id="851587">
    <property type="hits" value="10 hits in 10 CRISPR screens"/>
</dbReference>
<dbReference type="CD-CODE" id="E03F929F">
    <property type="entry name" value="Stress granule"/>
</dbReference>
<dbReference type="PRO" id="PR:P07284"/>
<dbReference type="Proteomes" id="UP000002311">
    <property type="component" value="Chromosome IV"/>
</dbReference>
<dbReference type="RNAct" id="P07284">
    <property type="molecule type" value="protein"/>
</dbReference>
<dbReference type="GO" id="GO:0005737">
    <property type="term" value="C:cytoplasm"/>
    <property type="evidence" value="ECO:0007005"/>
    <property type="project" value="SGD"/>
</dbReference>
<dbReference type="GO" id="GO:0010494">
    <property type="term" value="C:cytoplasmic stress granule"/>
    <property type="evidence" value="ECO:0007005"/>
    <property type="project" value="SGD"/>
</dbReference>
<dbReference type="GO" id="GO:0005829">
    <property type="term" value="C:cytosol"/>
    <property type="evidence" value="ECO:0000250"/>
    <property type="project" value="UniProtKB"/>
</dbReference>
<dbReference type="GO" id="GO:0005524">
    <property type="term" value="F:ATP binding"/>
    <property type="evidence" value="ECO:0007669"/>
    <property type="project" value="UniProtKB-KW"/>
</dbReference>
<dbReference type="GO" id="GO:1990825">
    <property type="term" value="F:sequence-specific mRNA binding"/>
    <property type="evidence" value="ECO:0000314"/>
    <property type="project" value="SGD"/>
</dbReference>
<dbReference type="GO" id="GO:0004828">
    <property type="term" value="F:serine-tRNA ligase activity"/>
    <property type="evidence" value="ECO:0000314"/>
    <property type="project" value="SGD"/>
</dbReference>
<dbReference type="GO" id="GO:0000049">
    <property type="term" value="F:tRNA binding"/>
    <property type="evidence" value="ECO:0000318"/>
    <property type="project" value="GO_Central"/>
</dbReference>
<dbReference type="GO" id="GO:0002181">
    <property type="term" value="P:cytoplasmic translation"/>
    <property type="evidence" value="ECO:0000250"/>
    <property type="project" value="UniProtKB"/>
</dbReference>
<dbReference type="GO" id="GO:0110004">
    <property type="term" value="P:positive regulation of tRNA methylation"/>
    <property type="evidence" value="ECO:0000314"/>
    <property type="project" value="SGD"/>
</dbReference>
<dbReference type="GO" id="GO:0006434">
    <property type="term" value="P:seryl-tRNA aminoacylation"/>
    <property type="evidence" value="ECO:0000314"/>
    <property type="project" value="SGD"/>
</dbReference>
<dbReference type="CDD" id="cd00770">
    <property type="entry name" value="SerRS_core"/>
    <property type="match status" value="1"/>
</dbReference>
<dbReference type="FunFam" id="1.10.287.40:FF:000003">
    <property type="entry name" value="Serine--tRNA ligase cytoplasmic"/>
    <property type="match status" value="1"/>
</dbReference>
<dbReference type="FunFam" id="3.30.930.10:FF:000026">
    <property type="entry name" value="Seryl-tRNA synthetase, cytoplasmic"/>
    <property type="match status" value="1"/>
</dbReference>
<dbReference type="Gene3D" id="3.30.930.10">
    <property type="entry name" value="Bira Bifunctional Protein, Domain 2"/>
    <property type="match status" value="1"/>
</dbReference>
<dbReference type="Gene3D" id="1.10.287.40">
    <property type="entry name" value="Serine-tRNA synthetase, tRNA binding domain"/>
    <property type="match status" value="1"/>
</dbReference>
<dbReference type="InterPro" id="IPR002314">
    <property type="entry name" value="aa-tRNA-synt_IIb"/>
</dbReference>
<dbReference type="InterPro" id="IPR006195">
    <property type="entry name" value="aa-tRNA-synth_II"/>
</dbReference>
<dbReference type="InterPro" id="IPR045864">
    <property type="entry name" value="aa-tRNA-synth_II/BPL/LPL"/>
</dbReference>
<dbReference type="InterPro" id="IPR002317">
    <property type="entry name" value="Ser-tRNA-ligase_type_1"/>
</dbReference>
<dbReference type="InterPro" id="IPR015866">
    <property type="entry name" value="Ser-tRNA-synth_1_N"/>
</dbReference>
<dbReference type="InterPro" id="IPR042103">
    <property type="entry name" value="SerRS_1_N_sf"/>
</dbReference>
<dbReference type="InterPro" id="IPR033729">
    <property type="entry name" value="SerRS_core"/>
</dbReference>
<dbReference type="InterPro" id="IPR010978">
    <property type="entry name" value="tRNA-bd_arm"/>
</dbReference>
<dbReference type="NCBIfam" id="TIGR00414">
    <property type="entry name" value="serS"/>
    <property type="match status" value="1"/>
</dbReference>
<dbReference type="PANTHER" id="PTHR11778">
    <property type="entry name" value="SERYL-TRNA SYNTHETASE"/>
    <property type="match status" value="1"/>
</dbReference>
<dbReference type="Pfam" id="PF02403">
    <property type="entry name" value="Seryl_tRNA_N"/>
    <property type="match status" value="1"/>
</dbReference>
<dbReference type="Pfam" id="PF00587">
    <property type="entry name" value="tRNA-synt_2b"/>
    <property type="match status" value="1"/>
</dbReference>
<dbReference type="PIRSF" id="PIRSF001529">
    <property type="entry name" value="Ser-tRNA-synth_IIa"/>
    <property type="match status" value="1"/>
</dbReference>
<dbReference type="PRINTS" id="PR00981">
    <property type="entry name" value="TRNASYNTHSER"/>
</dbReference>
<dbReference type="SUPFAM" id="SSF55681">
    <property type="entry name" value="Class II aaRS and biotin synthetases"/>
    <property type="match status" value="1"/>
</dbReference>
<dbReference type="SUPFAM" id="SSF46589">
    <property type="entry name" value="tRNA-binding arm"/>
    <property type="match status" value="1"/>
</dbReference>
<dbReference type="PROSITE" id="PS50862">
    <property type="entry name" value="AA_TRNA_LIGASE_II"/>
    <property type="match status" value="1"/>
</dbReference>
<keyword id="KW-0030">Aminoacyl-tRNA synthetase</keyword>
<keyword id="KW-0067">ATP-binding</keyword>
<keyword id="KW-0963">Cytoplasm</keyword>
<keyword id="KW-0903">Direct protein sequencing</keyword>
<keyword id="KW-1017">Isopeptide bond</keyword>
<keyword id="KW-0436">Ligase</keyword>
<keyword id="KW-0547">Nucleotide-binding</keyword>
<keyword id="KW-0648">Protein biosynthesis</keyword>
<keyword id="KW-1185">Reference proteome</keyword>
<keyword id="KW-0832">Ubl conjugation</keyword>
<name>SYSC_YEAST</name>